<organism evidence="6 8">
    <name type="scientific">Bacteroides fragilis (strain ATCC 25285 / DSM 2151 / CCUG 4856 / JCM 11019 / LMG 10263 / NCTC 9343 / Onslow / VPI 2553 / EN-2)</name>
    <dbReference type="NCBI Taxonomy" id="272559"/>
    <lineage>
        <taxon>Bacteria</taxon>
        <taxon>Pseudomonadati</taxon>
        <taxon>Bacteroidota</taxon>
        <taxon>Bacteroidia</taxon>
        <taxon>Bacteroidales</taxon>
        <taxon>Bacteroidaceae</taxon>
        <taxon>Bacteroides</taxon>
    </lineage>
</organism>
<name>BGLR_BACFN</name>
<evidence type="ECO:0000250" key="1">
    <source>
        <dbReference type="UniProtKB" id="P05804"/>
    </source>
</evidence>
<evidence type="ECO:0000269" key="2">
    <source>
    </source>
</evidence>
<evidence type="ECO:0000303" key="3">
    <source>
    </source>
</evidence>
<evidence type="ECO:0000305" key="4"/>
<evidence type="ECO:0000305" key="5">
    <source>
    </source>
</evidence>
<evidence type="ECO:0000312" key="6">
    <source>
        <dbReference type="EMBL" id="CAH06099.1"/>
    </source>
</evidence>
<evidence type="ECO:0000312" key="7">
    <source>
        <dbReference type="EMBL" id="SUV38069.1"/>
    </source>
</evidence>
<evidence type="ECO:0000312" key="8">
    <source>
        <dbReference type="Proteomes" id="UP000006731"/>
    </source>
</evidence>
<evidence type="ECO:0007744" key="9">
    <source>
        <dbReference type="PDB" id="3CMG"/>
    </source>
</evidence>
<evidence type="ECO:0007744" key="10">
    <source>
        <dbReference type="PDB" id="5Z1A"/>
    </source>
</evidence>
<evidence type="ECO:0007829" key="11">
    <source>
        <dbReference type="PDB" id="5Z1A"/>
    </source>
</evidence>
<proteinExistence type="evidence at protein level"/>
<reference key="1">
    <citation type="journal article" date="2005" name="Science">
        <title>Extensive DNA inversions in the B. fragilis genome control variable gene expression.</title>
        <authorList>
            <person name="Cerdeno-Tarraga A.-M."/>
            <person name="Patrick S."/>
            <person name="Crossman L.C."/>
            <person name="Blakely G."/>
            <person name="Abratt V."/>
            <person name="Lennard N."/>
            <person name="Poxton I."/>
            <person name="Duerden B."/>
            <person name="Harris B."/>
            <person name="Quail M.A."/>
            <person name="Barron A."/>
            <person name="Clark L."/>
            <person name="Corton C."/>
            <person name="Doggett J."/>
            <person name="Holden M.T.G."/>
            <person name="Larke N."/>
            <person name="Line A."/>
            <person name="Lord A."/>
            <person name="Norbertczak H."/>
            <person name="Ormond D."/>
            <person name="Price C."/>
            <person name="Rabbinowitsch E."/>
            <person name="Woodward J."/>
            <person name="Barrell B.G."/>
            <person name="Parkhill J."/>
        </authorList>
    </citation>
    <scope>NUCLEOTIDE SEQUENCE [LARGE SCALE GENOMIC DNA]</scope>
    <source>
        <strain>ATCC 25285 / DSM 2151 / CCUG 4856 / JCM 11019 / LMG 10263 / NCTC 9343 / Onslow / VPI 2553 / EN-2</strain>
    </source>
</reference>
<reference key="2">
    <citation type="submission" date="2018-06" db="EMBL/GenBank/DDBJ databases">
        <authorList>
            <consortium name="Pathogen Informatics"/>
            <person name="Doyle S."/>
        </authorList>
    </citation>
    <scope>NUCLEOTIDE SEQUENCE [LARGE SCALE GENOMIC DNA]</scope>
    <source>
        <strain>ATCC 25285 / DSM 2151 / CCUG 4856 / JCM 11019 / LMG 10263 / NCTC 9343 / Onslow / VPI 2553 / EN-2</strain>
    </source>
</reference>
<reference key="3">
    <citation type="journal article" date="2015" name="Chem. Biol.">
        <title>Structure and Inhibition of Microbiome beta-Glucuronidases Essential to the Alleviation of Cancer Drug Toxicity.</title>
        <authorList>
            <person name="Wallace B.D."/>
            <person name="Roberts A.B."/>
            <person name="Pollet R.M."/>
            <person name="Ingle J.D."/>
            <person name="Biernat K.A."/>
            <person name="Pellock S.J."/>
            <person name="Venkatesh M.K."/>
            <person name="Guthrie L."/>
            <person name="O'Neal S.K."/>
            <person name="Robinson S.J."/>
            <person name="Dollinger M."/>
            <person name="Figueroa E."/>
            <person name="McShane S.R."/>
            <person name="Cohen R.D."/>
            <person name="Jin J."/>
            <person name="Frye S.V."/>
            <person name="Zamboni W.C."/>
            <person name="Pepe-Ranney C."/>
            <person name="Mani S."/>
            <person name="Kelly L."/>
            <person name="Redinbo M.R."/>
        </authorList>
    </citation>
    <scope>FUNCTION</scope>
    <scope>CATALYTIC ACTIVITY</scope>
    <scope>BIOPHYSICOCHEMICAL PROPERTIES</scope>
</reference>
<reference evidence="9" key="4">
    <citation type="submission" date="2008-03" db="PDB data bank">
        <title>Crystal structure of putative beta-galactosidase from Bacteroides fragilis.</title>
        <authorList>
            <person name="Ramagopal U.A."/>
            <person name="Rutter M."/>
            <person name="Toro R."/>
            <person name="Hu S."/>
            <person name="Maletic M."/>
            <person name="Gheyi T."/>
            <person name="Sauder J.M."/>
            <person name="Burley S.K."/>
            <person name="Almo S.C."/>
        </authorList>
    </citation>
    <scope>X-RAY CRYSTALLOGRAPHY (1.90 ANGSTROMS) OF 38-693</scope>
</reference>
<reference evidence="10" key="5">
    <citation type="submission" date="2017-12" db="PDB data bank">
        <title>Dissection of the substrate preference and structure of gut microbial-glucuronidases identifies the major bacteria causing xenobiotic toxicity.</title>
        <authorList>
            <person name="Dashnyam P."/>
            <person name="Mudududdla R."/>
            <person name="Hsieh T.J."/>
            <person name="Lin T.C."/>
            <person name="Lin H.Y."/>
            <person name="Chen P.Y."/>
            <person name="Hsu C.Y."/>
            <person name="Lin C.H."/>
        </authorList>
    </citation>
    <scope>X-RAY CRYSTALLOGRAPHY (1.86 ANGSTROMS) OF 38-690</scope>
</reference>
<dbReference type="EC" id="3.2.1.31" evidence="2"/>
<dbReference type="EMBL" id="CR626927">
    <property type="protein sequence ID" value="CAH06099.1"/>
    <property type="molecule type" value="Genomic_DNA"/>
</dbReference>
<dbReference type="EMBL" id="UFTH01000001">
    <property type="protein sequence ID" value="SUV38069.1"/>
    <property type="molecule type" value="Genomic_DNA"/>
</dbReference>
<dbReference type="PDB" id="3CMG">
    <property type="method" value="X-ray"/>
    <property type="resolution" value="1.90 A"/>
    <property type="chains" value="A=38-693"/>
</dbReference>
<dbReference type="PDB" id="5Z1A">
    <property type="method" value="X-ray"/>
    <property type="resolution" value="1.86 A"/>
    <property type="chains" value="A=38-690"/>
</dbReference>
<dbReference type="PDBsum" id="3CMG"/>
<dbReference type="PDBsum" id="5Z1A"/>
<dbReference type="SMR" id="Q5LIC7"/>
<dbReference type="CAZy" id="GH2">
    <property type="family name" value="Glycoside Hydrolase Family 2"/>
</dbReference>
<dbReference type="PaxDb" id="272559-BF9343_0320"/>
<dbReference type="DNASU" id="3286062"/>
<dbReference type="KEGG" id="bfs:BF9343_0320"/>
<dbReference type="eggNOG" id="COG3250">
    <property type="taxonomic scope" value="Bacteria"/>
</dbReference>
<dbReference type="HOGENOM" id="CLU_006501_5_0_10"/>
<dbReference type="BioCyc" id="BFRA272559:G1GHZ-333-MONOMER"/>
<dbReference type="EvolutionaryTrace" id="Q5LIC7"/>
<dbReference type="Proteomes" id="UP000006731">
    <property type="component" value="Chromosome"/>
</dbReference>
<dbReference type="GO" id="GO:0004565">
    <property type="term" value="F:beta-galactosidase activity"/>
    <property type="evidence" value="ECO:0007669"/>
    <property type="project" value="UniProtKB-EC"/>
</dbReference>
<dbReference type="GO" id="GO:0005975">
    <property type="term" value="P:carbohydrate metabolic process"/>
    <property type="evidence" value="ECO:0007669"/>
    <property type="project" value="InterPro"/>
</dbReference>
<dbReference type="Gene3D" id="2.60.120.260">
    <property type="entry name" value="Galactose-binding domain-like"/>
    <property type="match status" value="1"/>
</dbReference>
<dbReference type="Gene3D" id="3.20.20.80">
    <property type="entry name" value="Glycosidases"/>
    <property type="match status" value="1"/>
</dbReference>
<dbReference type="Gene3D" id="2.60.40.10">
    <property type="entry name" value="Immunoglobulins"/>
    <property type="match status" value="2"/>
</dbReference>
<dbReference type="InterPro" id="IPR036156">
    <property type="entry name" value="Beta-gal/glucu_dom_sf"/>
</dbReference>
<dbReference type="InterPro" id="IPR032311">
    <property type="entry name" value="DUF4982"/>
</dbReference>
<dbReference type="InterPro" id="IPR008979">
    <property type="entry name" value="Galactose-bd-like_sf"/>
</dbReference>
<dbReference type="InterPro" id="IPR051913">
    <property type="entry name" value="GH2_Domain-Containing"/>
</dbReference>
<dbReference type="InterPro" id="IPR006101">
    <property type="entry name" value="Glyco_hydro_2"/>
</dbReference>
<dbReference type="InterPro" id="IPR006103">
    <property type="entry name" value="Glyco_hydro_2_cat"/>
</dbReference>
<dbReference type="InterPro" id="IPR006102">
    <property type="entry name" value="Glyco_hydro_2_Ig-like"/>
</dbReference>
<dbReference type="InterPro" id="IPR006104">
    <property type="entry name" value="Glyco_hydro_2_N"/>
</dbReference>
<dbReference type="InterPro" id="IPR017853">
    <property type="entry name" value="Glycoside_hydrolase_SF"/>
</dbReference>
<dbReference type="InterPro" id="IPR013783">
    <property type="entry name" value="Ig-like_fold"/>
</dbReference>
<dbReference type="PANTHER" id="PTHR42732">
    <property type="entry name" value="BETA-GALACTOSIDASE"/>
    <property type="match status" value="1"/>
</dbReference>
<dbReference type="PANTHER" id="PTHR42732:SF1">
    <property type="entry name" value="BETA-MANNOSIDASE"/>
    <property type="match status" value="1"/>
</dbReference>
<dbReference type="Pfam" id="PF16355">
    <property type="entry name" value="DUF4982"/>
    <property type="match status" value="1"/>
</dbReference>
<dbReference type="Pfam" id="PF00703">
    <property type="entry name" value="Glyco_hydro_2"/>
    <property type="match status" value="1"/>
</dbReference>
<dbReference type="Pfam" id="PF02836">
    <property type="entry name" value="Glyco_hydro_2_C"/>
    <property type="match status" value="1"/>
</dbReference>
<dbReference type="Pfam" id="PF02837">
    <property type="entry name" value="Glyco_hydro_2_N"/>
    <property type="match status" value="1"/>
</dbReference>
<dbReference type="PRINTS" id="PR00132">
    <property type="entry name" value="GLHYDRLASE2"/>
</dbReference>
<dbReference type="SUPFAM" id="SSF51445">
    <property type="entry name" value="(Trans)glycosidases"/>
    <property type="match status" value="1"/>
</dbReference>
<dbReference type="SUPFAM" id="SSF49303">
    <property type="entry name" value="beta-Galactosidase/glucuronidase domain"/>
    <property type="match status" value="1"/>
</dbReference>
<dbReference type="SUPFAM" id="SSF49785">
    <property type="entry name" value="Galactose-binding domain-like"/>
    <property type="match status" value="1"/>
</dbReference>
<accession>Q5LIC7</accession>
<accession>A0A380YWH8</accession>
<feature type="chain" id="PRO_0000458759" description="Beta-glucuronidase">
    <location>
        <begin position="1"/>
        <end position="695"/>
    </location>
</feature>
<feature type="short sequence motif" description="N-K motif" evidence="5">
    <location>
        <begin position="581"/>
        <end position="583"/>
    </location>
</feature>
<feature type="active site" description="Proton donor" evidence="1">
    <location>
        <position position="429"/>
    </location>
</feature>
<feature type="binding site" evidence="1">
    <location>
        <position position="428"/>
    </location>
    <ligand>
        <name>D-glucuronate</name>
        <dbReference type="ChEBI" id="CHEBI:58720"/>
    </ligand>
</feature>
<feature type="binding site" evidence="1">
    <location>
        <position position="477"/>
    </location>
    <ligand>
        <name>D-glucuronate</name>
        <dbReference type="ChEBI" id="CHEBI:58720"/>
    </ligand>
</feature>
<feature type="binding site" evidence="1">
    <location>
        <position position="483"/>
    </location>
    <ligand>
        <name>D-glucuronate</name>
        <dbReference type="ChEBI" id="CHEBI:58720"/>
    </ligand>
</feature>
<feature type="binding site" evidence="1">
    <location>
        <position position="562"/>
    </location>
    <ligand>
        <name>D-glucuronate</name>
        <dbReference type="ChEBI" id="CHEBI:58720"/>
    </ligand>
</feature>
<feature type="binding site" evidence="1">
    <location>
        <position position="583"/>
    </location>
    <ligand>
        <name>D-glucuronate</name>
        <dbReference type="ChEBI" id="CHEBI:58720"/>
    </ligand>
</feature>
<feature type="strand" evidence="11">
    <location>
        <begin position="39"/>
        <end position="42"/>
    </location>
</feature>
<feature type="strand" evidence="11">
    <location>
        <begin position="47"/>
        <end position="51"/>
    </location>
</feature>
<feature type="strand" evidence="11">
    <location>
        <begin position="60"/>
        <end position="62"/>
    </location>
</feature>
<feature type="turn" evidence="11">
    <location>
        <begin position="68"/>
        <end position="72"/>
    </location>
</feature>
<feature type="helix" evidence="11">
    <location>
        <begin position="73"/>
        <end position="75"/>
    </location>
</feature>
<feature type="strand" evidence="11">
    <location>
        <begin position="83"/>
        <end position="92"/>
    </location>
</feature>
<feature type="helix" evidence="11">
    <location>
        <begin position="95"/>
        <end position="97"/>
    </location>
</feature>
<feature type="strand" evidence="11">
    <location>
        <begin position="100"/>
        <end position="107"/>
    </location>
</feature>
<feature type="strand" evidence="11">
    <location>
        <begin position="110"/>
        <end position="117"/>
    </location>
</feature>
<feature type="strand" evidence="11">
    <location>
        <begin position="120"/>
        <end position="126"/>
    </location>
</feature>
<feature type="strand" evidence="11">
    <location>
        <begin position="128"/>
        <end position="130"/>
    </location>
</feature>
<feature type="strand" evidence="11">
    <location>
        <begin position="132"/>
        <end position="135"/>
    </location>
</feature>
<feature type="turn" evidence="11">
    <location>
        <begin position="137"/>
        <end position="139"/>
    </location>
</feature>
<feature type="strand" evidence="11">
    <location>
        <begin position="144"/>
        <end position="153"/>
    </location>
</feature>
<feature type="strand" evidence="11">
    <location>
        <begin position="158"/>
        <end position="161"/>
    </location>
</feature>
<feature type="strand" evidence="11">
    <location>
        <begin position="177"/>
        <end position="182"/>
    </location>
</feature>
<feature type="strand" evidence="11">
    <location>
        <begin position="184"/>
        <end position="187"/>
    </location>
</feature>
<feature type="strand" evidence="11">
    <location>
        <begin position="196"/>
        <end position="204"/>
    </location>
</feature>
<feature type="strand" evidence="11">
    <location>
        <begin position="206"/>
        <end position="219"/>
    </location>
</feature>
<feature type="strand" evidence="11">
    <location>
        <begin position="221"/>
        <end position="234"/>
    </location>
</feature>
<feature type="strand" evidence="11">
    <location>
        <begin position="237"/>
        <end position="248"/>
    </location>
</feature>
<feature type="strand" evidence="11">
    <location>
        <begin position="253"/>
        <end position="264"/>
    </location>
</feature>
<feature type="helix" evidence="11">
    <location>
        <begin position="270"/>
        <end position="272"/>
    </location>
</feature>
<feature type="strand" evidence="11">
    <location>
        <begin position="277"/>
        <end position="285"/>
    </location>
</feature>
<feature type="strand" evidence="11">
    <location>
        <begin position="288"/>
        <end position="297"/>
    </location>
</feature>
<feature type="strand" evidence="11">
    <location>
        <begin position="302"/>
        <end position="305"/>
    </location>
</feature>
<feature type="turn" evidence="11">
    <location>
        <begin position="306"/>
        <end position="308"/>
    </location>
</feature>
<feature type="strand" evidence="11">
    <location>
        <begin position="309"/>
        <end position="312"/>
    </location>
</feature>
<feature type="strand" evidence="11">
    <location>
        <begin position="320"/>
        <end position="323"/>
    </location>
</feature>
<feature type="turn" evidence="11">
    <location>
        <begin position="329"/>
        <end position="331"/>
    </location>
</feature>
<feature type="helix" evidence="11">
    <location>
        <begin position="337"/>
        <end position="349"/>
    </location>
</feature>
<feature type="strand" evidence="11">
    <location>
        <begin position="354"/>
        <end position="357"/>
    </location>
</feature>
<feature type="helix" evidence="11">
    <location>
        <begin position="364"/>
        <end position="373"/>
    </location>
</feature>
<feature type="strand" evidence="11">
    <location>
        <begin position="376"/>
        <end position="380"/>
    </location>
</feature>
<feature type="strand" evidence="11">
    <location>
        <begin position="389"/>
        <end position="391"/>
    </location>
</feature>
<feature type="helix" evidence="11">
    <location>
        <begin position="398"/>
        <end position="414"/>
    </location>
</feature>
<feature type="strand" evidence="11">
    <location>
        <begin position="421"/>
        <end position="429"/>
    </location>
</feature>
<feature type="strand" evidence="11">
    <location>
        <begin position="433"/>
        <end position="435"/>
    </location>
</feature>
<feature type="helix" evidence="11">
    <location>
        <begin position="438"/>
        <end position="451"/>
    </location>
</feature>
<feature type="strand" evidence="11">
    <location>
        <begin position="457"/>
        <end position="462"/>
    </location>
</feature>
<feature type="helix" evidence="11">
    <location>
        <begin position="466"/>
        <end position="469"/>
    </location>
</feature>
<feature type="strand" evidence="11">
    <location>
        <begin position="470"/>
        <end position="477"/>
    </location>
</feature>
<feature type="turn" evidence="11">
    <location>
        <begin position="480"/>
        <end position="482"/>
    </location>
</feature>
<feature type="strand" evidence="11">
    <location>
        <begin position="483"/>
        <end position="485"/>
    </location>
</feature>
<feature type="helix" evidence="11">
    <location>
        <begin position="488"/>
        <end position="500"/>
    </location>
</feature>
<feature type="strand" evidence="11">
    <location>
        <begin position="506"/>
        <end position="511"/>
    </location>
</feature>
<feature type="helix" evidence="11">
    <location>
        <begin position="536"/>
        <end position="551"/>
    </location>
</feature>
<feature type="strand" evidence="11">
    <location>
        <begin position="559"/>
        <end position="562"/>
    </location>
</feature>
<feature type="strand" evidence="11">
    <location>
        <begin position="567"/>
        <end position="574"/>
    </location>
</feature>
<feature type="strand" evidence="11">
    <location>
        <begin position="577"/>
        <end position="581"/>
    </location>
</feature>
<feature type="helix" evidence="11">
    <location>
        <begin position="595"/>
        <end position="604"/>
    </location>
</feature>
<feature type="strand" evidence="11">
    <location>
        <begin position="611"/>
        <end position="613"/>
    </location>
</feature>
<feature type="turn" evidence="11">
    <location>
        <begin position="614"/>
        <end position="617"/>
    </location>
</feature>
<feature type="strand" evidence="11">
    <location>
        <begin position="624"/>
        <end position="641"/>
    </location>
</feature>
<feature type="strand" evidence="11">
    <location>
        <begin position="644"/>
        <end position="650"/>
    </location>
</feature>
<feature type="strand" evidence="11">
    <location>
        <begin position="655"/>
        <end position="662"/>
    </location>
</feature>
<feature type="strand" evidence="11">
    <location>
        <begin position="666"/>
        <end position="674"/>
    </location>
</feature>
<feature type="strand" evidence="11">
    <location>
        <begin position="676"/>
        <end position="679"/>
    </location>
</feature>
<feature type="strand" evidence="11">
    <location>
        <begin position="682"/>
        <end position="689"/>
    </location>
</feature>
<sequence length="695" mass="79909">MKQQKCNYFPSLWWRGREKGLSTFLFLLLFSISLHAQRQDILLNNNWNFRFSHQVQGDTRRVDLPHTWNAQDALAGKIDYKRGIGNYEKALYIRPEWKGKRLFLRFDGVNSIADVFINRKHIGEHRGGYGAFIFEITDLVKYGEKNSVLVRANNGEQLDIMPLVGDFNFYGGIYRDVHLLITDETCISPLDYASPGVYLVQEVVSPQEAKVCAKVNLSNRAADGTAELQVLVTDGTKVICKESRNVSLKQGADILEQLPLLIQKPRLWNGCEDPFMYQVSISLHKDGKQIDSVTQPLGLRYYHTDPDKGFFLNGKHLPLHGVCRHQDRAEVGNALRPQHHEEDVALMREMGVNAIRLAHYPQATYMYDLMDKHGIVTWAEIPFVGPGGYADKGFVDQASFRENGKQQLIELIRQHYNHPSICFWGLFNELKEVGDNPVEYVKELNALAKQEDPTRPTTSASNQDGNLNFITENIAWNRYDGWYGSTPKTLATFLDRTHKKHPELRIGISEYGAGASIYHQQDSLKQPSASGWWHPENWQTYYHMENWKIIAERPFVWGTFVWNMFDFGAAHRTEGDRPGINDKGLVTFDRKVRKDAFYFYKANWNKQEPMIYLAEKRCRLRYQPEQTFMAFTTAPEAELFVNGVSCGKQKADTYSTVVWKNVKLTSGENIIRVTTPGKKPLTDEVTVEYKEDRPL</sequence>
<comment type="function">
    <text evidence="2">Displays beta-glucuronidase activity with the artificial substrate p-nitrophenyl-beta-D-glucuronide (PNPG). Is likely capable of scavenging glucuronate from a range of chemically distinct xenobiotic and endobiotic glucuronides present in the gastrointestinal (GI) tract, to be able to utilize these diverse sources of carbon. As part of the GI microbiome, this enzyme would be able to reactivate glucuronide drug conjugates, such reactivated compounds can significantly damage the GI tract.</text>
</comment>
<comment type="catalytic activity">
    <reaction evidence="2">
        <text>a beta-D-glucuronoside + H2O = D-glucuronate + an alcohol</text>
        <dbReference type="Rhea" id="RHEA:17633"/>
        <dbReference type="ChEBI" id="CHEBI:15377"/>
        <dbReference type="ChEBI" id="CHEBI:30879"/>
        <dbReference type="ChEBI" id="CHEBI:58720"/>
        <dbReference type="ChEBI" id="CHEBI:83411"/>
        <dbReference type="EC" id="3.2.1.31"/>
    </reaction>
    <physiologicalReaction direction="left-to-right" evidence="5">
        <dbReference type="Rhea" id="RHEA:17634"/>
    </physiologicalReaction>
</comment>
<comment type="biophysicochemical properties">
    <kinetics>
        <KM evidence="2">1.9 mM for p-nitrophenyl-beta-D-glucuronide</KM>
        <text evidence="2">kcat is 18 sec(-1) with p-nitrophenyl-beta-D-glucuronide as substrate.</text>
    </kinetics>
</comment>
<comment type="domain">
    <text evidence="5">The N-K motif seems to be a discriminant that could be employed as a fingerprint to identify beta-glucuronidases from the large GH2 family of proteins.</text>
</comment>
<comment type="similarity">
    <text evidence="4">Belongs to the glycosyl hydrolase 2 family.</text>
</comment>
<comment type="caution">
    <text evidence="2">Was originally thought to be a beta-galactosidase, but in vitro assays confirm that it is a beta-glucuronidase.</text>
</comment>
<gene>
    <name evidence="7" type="primary">lacZ_4</name>
    <name evidence="6" type="ordered locus">BF0328</name>
    <name evidence="6" type="ORF">BF9343_0320</name>
    <name evidence="7" type="ORF">NCTC9343_01965</name>
</gene>
<protein>
    <recommendedName>
        <fullName evidence="3">Beta-glucuronidase</fullName>
        <shortName evidence="3">GUS</shortName>
        <ecNumber evidence="2">3.2.1.31</ecNumber>
    </recommendedName>
    <alternativeName>
        <fullName evidence="3">BfGUS</fullName>
    </alternativeName>
</protein>
<keyword id="KW-0002">3D-structure</keyword>
<keyword id="KW-0326">Glycosidase</keyword>
<keyword id="KW-0378">Hydrolase</keyword>